<proteinExistence type="inferred from homology"/>
<keyword id="KW-0067">ATP-binding</keyword>
<keyword id="KW-0143">Chaperone</keyword>
<keyword id="KW-0963">Cytoplasm</keyword>
<keyword id="KW-0413">Isomerase</keyword>
<keyword id="KW-0547">Nucleotide-binding</keyword>
<keyword id="KW-1185">Reference proteome</keyword>
<keyword id="KW-0346">Stress response</keyword>
<evidence type="ECO:0000255" key="1">
    <source>
        <dbReference type="HAMAP-Rule" id="MF_00600"/>
    </source>
</evidence>
<evidence type="ECO:0000256" key="2">
    <source>
        <dbReference type="SAM" id="MobiDB-lite"/>
    </source>
</evidence>
<sequence>MSKQIVHSDQCRKKIIEGINVVANAVGITLGPKGRCVAIEQSYGPPKITKDGVSVAKAIQLKDKSLNVGAQFVISVASKTADVAGDGTTTATVIADAAVRELNKAEVAGIDIQEVRKGAEKAVEAVIADVRKNSSPVKNEEEIAQVATVSSNGDREIGEKIANAMKQVGQEGVITVEDSKNFNFEVEVVKGMRFDRGYISQYFATNREKMITEFENPYILLLDQKVSTVQPLVPVLEAVAHTGKPLVLIADDVDGEALTALILNNLKGSIKVVAVKAPGFGDRKKEMLEDIAILTNGEVITEQLGIKLEKVNDTSKLGTANRVIVTKDHTTIVHDKNNSDIEKKVNSRCEQIREAIKDTTSDYEKEKLQERLAKLRNGVAVLKVGGATEVEQKERKDRVEDALHATRAAVEEGIVPGGGVALFYASRVLDSLKFDNEDQRVGINIIKKVLEAPVRQIVKNAGGKEDVVVNELSKSNDKNRGFDARTMQYVDMIKAGIVDPTKVVRTALQDAFSVASLVIATSAMITDHEEDNNTNRSGGGVGGGHHGGMGGMDF</sequence>
<comment type="function">
    <text evidence="1">Together with its co-chaperonin GroES, plays an essential role in assisting protein folding. The GroEL-GroES system forms a nano-cage that allows encapsulation of the non-native substrate proteins and provides a physical environment optimized to promote and accelerate protein folding.</text>
</comment>
<comment type="catalytic activity">
    <reaction evidence="1">
        <text>ATP + H2O + a folded polypeptide = ADP + phosphate + an unfolded polypeptide.</text>
        <dbReference type="EC" id="5.6.1.7"/>
    </reaction>
</comment>
<comment type="subunit">
    <text evidence="1">Forms a cylinder of 14 subunits composed of two heptameric rings stacked back-to-back. Interacts with the co-chaperonin GroES.</text>
</comment>
<comment type="subcellular location">
    <subcellularLocation>
        <location evidence="1">Cytoplasm</location>
    </subcellularLocation>
</comment>
<comment type="similarity">
    <text evidence="1">Belongs to the chaperonin (HSP60) family.</text>
</comment>
<dbReference type="EC" id="5.6.1.7" evidence="1"/>
<dbReference type="EMBL" id="AM494475">
    <property type="protein sequence ID" value="CAM79983.1"/>
    <property type="molecule type" value="Genomic_DNA"/>
</dbReference>
<dbReference type="RefSeq" id="WP_011944700.1">
    <property type="nucleotide sequence ID" value="NC_009488.1"/>
</dbReference>
<dbReference type="SMR" id="A5CDL9"/>
<dbReference type="KEGG" id="ots:OTBS_0917"/>
<dbReference type="eggNOG" id="COG0459">
    <property type="taxonomic scope" value="Bacteria"/>
</dbReference>
<dbReference type="HOGENOM" id="CLU_016503_3_0_5"/>
<dbReference type="Proteomes" id="UP000001565">
    <property type="component" value="Chromosome"/>
</dbReference>
<dbReference type="GO" id="GO:0005737">
    <property type="term" value="C:cytoplasm"/>
    <property type="evidence" value="ECO:0007669"/>
    <property type="project" value="UniProtKB-SubCell"/>
</dbReference>
<dbReference type="GO" id="GO:0005524">
    <property type="term" value="F:ATP binding"/>
    <property type="evidence" value="ECO:0007669"/>
    <property type="project" value="UniProtKB-UniRule"/>
</dbReference>
<dbReference type="GO" id="GO:0140662">
    <property type="term" value="F:ATP-dependent protein folding chaperone"/>
    <property type="evidence" value="ECO:0007669"/>
    <property type="project" value="InterPro"/>
</dbReference>
<dbReference type="GO" id="GO:0016853">
    <property type="term" value="F:isomerase activity"/>
    <property type="evidence" value="ECO:0007669"/>
    <property type="project" value="UniProtKB-KW"/>
</dbReference>
<dbReference type="GO" id="GO:0051082">
    <property type="term" value="F:unfolded protein binding"/>
    <property type="evidence" value="ECO:0007669"/>
    <property type="project" value="UniProtKB-UniRule"/>
</dbReference>
<dbReference type="GO" id="GO:0042026">
    <property type="term" value="P:protein refolding"/>
    <property type="evidence" value="ECO:0007669"/>
    <property type="project" value="UniProtKB-UniRule"/>
</dbReference>
<dbReference type="CDD" id="cd03344">
    <property type="entry name" value="GroEL"/>
    <property type="match status" value="1"/>
</dbReference>
<dbReference type="FunFam" id="3.50.7.10:FF:000001">
    <property type="entry name" value="60 kDa chaperonin"/>
    <property type="match status" value="1"/>
</dbReference>
<dbReference type="Gene3D" id="3.50.7.10">
    <property type="entry name" value="GroEL"/>
    <property type="match status" value="1"/>
</dbReference>
<dbReference type="Gene3D" id="1.10.560.10">
    <property type="entry name" value="GroEL-like equatorial domain"/>
    <property type="match status" value="1"/>
</dbReference>
<dbReference type="Gene3D" id="3.30.260.10">
    <property type="entry name" value="TCP-1-like chaperonin intermediate domain"/>
    <property type="match status" value="1"/>
</dbReference>
<dbReference type="HAMAP" id="MF_00600">
    <property type="entry name" value="CH60"/>
    <property type="match status" value="1"/>
</dbReference>
<dbReference type="InterPro" id="IPR018370">
    <property type="entry name" value="Chaperonin_Cpn60_CS"/>
</dbReference>
<dbReference type="InterPro" id="IPR001844">
    <property type="entry name" value="Cpn60/GroEL"/>
</dbReference>
<dbReference type="InterPro" id="IPR002423">
    <property type="entry name" value="Cpn60/GroEL/TCP-1"/>
</dbReference>
<dbReference type="InterPro" id="IPR027409">
    <property type="entry name" value="GroEL-like_apical_dom_sf"/>
</dbReference>
<dbReference type="InterPro" id="IPR027413">
    <property type="entry name" value="GROEL-like_equatorial_sf"/>
</dbReference>
<dbReference type="InterPro" id="IPR027410">
    <property type="entry name" value="TCP-1-like_intermed_sf"/>
</dbReference>
<dbReference type="NCBIfam" id="TIGR02348">
    <property type="entry name" value="GroEL"/>
    <property type="match status" value="1"/>
</dbReference>
<dbReference type="NCBIfam" id="NF000592">
    <property type="entry name" value="PRK00013.1"/>
    <property type="match status" value="1"/>
</dbReference>
<dbReference type="NCBIfam" id="NF009487">
    <property type="entry name" value="PRK12849.1"/>
    <property type="match status" value="1"/>
</dbReference>
<dbReference type="NCBIfam" id="NF009488">
    <property type="entry name" value="PRK12850.1"/>
    <property type="match status" value="1"/>
</dbReference>
<dbReference type="NCBIfam" id="NF009489">
    <property type="entry name" value="PRK12851.1"/>
    <property type="match status" value="1"/>
</dbReference>
<dbReference type="PANTHER" id="PTHR45633">
    <property type="entry name" value="60 KDA HEAT SHOCK PROTEIN, MITOCHONDRIAL"/>
    <property type="match status" value="1"/>
</dbReference>
<dbReference type="Pfam" id="PF00118">
    <property type="entry name" value="Cpn60_TCP1"/>
    <property type="match status" value="1"/>
</dbReference>
<dbReference type="PRINTS" id="PR00298">
    <property type="entry name" value="CHAPERONIN60"/>
</dbReference>
<dbReference type="SUPFAM" id="SSF52029">
    <property type="entry name" value="GroEL apical domain-like"/>
    <property type="match status" value="1"/>
</dbReference>
<dbReference type="SUPFAM" id="SSF48592">
    <property type="entry name" value="GroEL equatorial domain-like"/>
    <property type="match status" value="1"/>
</dbReference>
<dbReference type="SUPFAM" id="SSF54849">
    <property type="entry name" value="GroEL-intermediate domain like"/>
    <property type="match status" value="1"/>
</dbReference>
<dbReference type="PROSITE" id="PS00296">
    <property type="entry name" value="CHAPERONINS_CPN60"/>
    <property type="match status" value="1"/>
</dbReference>
<organism>
    <name type="scientific">Orientia tsutsugamushi (strain Boryong)</name>
    <name type="common">Rickettsia tsutsugamushi</name>
    <dbReference type="NCBI Taxonomy" id="357244"/>
    <lineage>
        <taxon>Bacteria</taxon>
        <taxon>Pseudomonadati</taxon>
        <taxon>Pseudomonadota</taxon>
        <taxon>Alphaproteobacteria</taxon>
        <taxon>Rickettsiales</taxon>
        <taxon>Rickettsiaceae</taxon>
        <taxon>Rickettsieae</taxon>
        <taxon>Orientia</taxon>
    </lineage>
</organism>
<name>CH60_ORITB</name>
<reference key="1">
    <citation type="journal article" date="2007" name="Proc. Natl. Acad. Sci. U.S.A.">
        <title>The Orientia tsutsugamushi genome reveals massive proliferation of conjugative type IV secretion system and host-cell interaction genes.</title>
        <authorList>
            <person name="Cho N.-H."/>
            <person name="Kim H.-R."/>
            <person name="Lee J.-H."/>
            <person name="Kim S.-Y."/>
            <person name="Kim J."/>
            <person name="Cha S."/>
            <person name="Kim S.-Y."/>
            <person name="Darby A.C."/>
            <person name="Fuxelius H.-H."/>
            <person name="Yin J."/>
            <person name="Kim J.H."/>
            <person name="Kim J."/>
            <person name="Lee S.J."/>
            <person name="Koh Y.-S."/>
            <person name="Jang W.-J."/>
            <person name="Park K.-H."/>
            <person name="Andersson S.G.E."/>
            <person name="Choi M.-S."/>
            <person name="Kim I.-S."/>
        </authorList>
    </citation>
    <scope>NUCLEOTIDE SEQUENCE [LARGE SCALE GENOMIC DNA]</scope>
    <source>
        <strain>Boryong</strain>
    </source>
</reference>
<gene>
    <name evidence="1" type="primary">groEL</name>
    <name evidence="1" type="synonym">groL</name>
    <name type="ordered locus">OTBS_0917</name>
</gene>
<protein>
    <recommendedName>
        <fullName evidence="1">Chaperonin GroEL</fullName>
        <ecNumber evidence="1">5.6.1.7</ecNumber>
    </recommendedName>
    <alternativeName>
        <fullName evidence="1">60 kDa chaperonin</fullName>
    </alternativeName>
    <alternativeName>
        <fullName evidence="1">Chaperonin-60</fullName>
        <shortName evidence="1">Cpn60</shortName>
    </alternativeName>
</protein>
<feature type="chain" id="PRO_1000025814" description="Chaperonin GroEL">
    <location>
        <begin position="1"/>
        <end position="554"/>
    </location>
</feature>
<feature type="region of interest" description="Disordered" evidence="2">
    <location>
        <begin position="528"/>
        <end position="554"/>
    </location>
</feature>
<feature type="compositionally biased region" description="Gly residues" evidence="2">
    <location>
        <begin position="537"/>
        <end position="554"/>
    </location>
</feature>
<feature type="binding site" evidence="1">
    <location>
        <begin position="29"/>
        <end position="32"/>
    </location>
    <ligand>
        <name>ATP</name>
        <dbReference type="ChEBI" id="CHEBI:30616"/>
    </ligand>
</feature>
<feature type="binding site" evidence="1">
    <location>
        <position position="50"/>
    </location>
    <ligand>
        <name>ATP</name>
        <dbReference type="ChEBI" id="CHEBI:30616"/>
    </ligand>
</feature>
<feature type="binding site" evidence="1">
    <location>
        <begin position="86"/>
        <end position="90"/>
    </location>
    <ligand>
        <name>ATP</name>
        <dbReference type="ChEBI" id="CHEBI:30616"/>
    </ligand>
</feature>
<feature type="binding site" evidence="1">
    <location>
        <position position="418"/>
    </location>
    <ligand>
        <name>ATP</name>
        <dbReference type="ChEBI" id="CHEBI:30616"/>
    </ligand>
</feature>
<feature type="binding site" evidence="1">
    <location>
        <position position="499"/>
    </location>
    <ligand>
        <name>ATP</name>
        <dbReference type="ChEBI" id="CHEBI:30616"/>
    </ligand>
</feature>
<accession>A5CDL9</accession>